<proteinExistence type="inferred from homology"/>
<feature type="chain" id="PRO_1000091195" description="D-alanine--D-alanine ligase">
    <location>
        <begin position="1"/>
        <end position="307"/>
    </location>
</feature>
<feature type="domain" description="ATP-grasp" evidence="2">
    <location>
        <begin position="101"/>
        <end position="301"/>
    </location>
</feature>
<feature type="binding site" evidence="2">
    <location>
        <begin position="127"/>
        <end position="182"/>
    </location>
    <ligand>
        <name>ATP</name>
        <dbReference type="ChEBI" id="CHEBI:30616"/>
    </ligand>
</feature>
<feature type="binding site" evidence="2">
    <location>
        <position position="251"/>
    </location>
    <ligand>
        <name>Mg(2+)</name>
        <dbReference type="ChEBI" id="CHEBI:18420"/>
        <label>1</label>
    </ligand>
</feature>
<feature type="binding site" evidence="2">
    <location>
        <position position="268"/>
    </location>
    <ligand>
        <name>Mg(2+)</name>
        <dbReference type="ChEBI" id="CHEBI:18420"/>
        <label>1</label>
    </ligand>
</feature>
<feature type="binding site" evidence="2">
    <location>
        <position position="268"/>
    </location>
    <ligand>
        <name>Mg(2+)</name>
        <dbReference type="ChEBI" id="CHEBI:18420"/>
        <label>2</label>
    </ligand>
</feature>
<feature type="binding site" evidence="2">
    <location>
        <position position="270"/>
    </location>
    <ligand>
        <name>Mg(2+)</name>
        <dbReference type="ChEBI" id="CHEBI:18420"/>
        <label>2</label>
    </ligand>
</feature>
<organism>
    <name type="scientific">Methylorubrum populi (strain ATCC BAA-705 / NCIMB 13946 / BJ001)</name>
    <name type="common">Methylobacterium populi</name>
    <dbReference type="NCBI Taxonomy" id="441620"/>
    <lineage>
        <taxon>Bacteria</taxon>
        <taxon>Pseudomonadati</taxon>
        <taxon>Pseudomonadota</taxon>
        <taxon>Alphaproteobacteria</taxon>
        <taxon>Hyphomicrobiales</taxon>
        <taxon>Methylobacteriaceae</taxon>
        <taxon>Methylorubrum</taxon>
    </lineage>
</organism>
<accession>B1ZGP9</accession>
<reference key="1">
    <citation type="submission" date="2008-04" db="EMBL/GenBank/DDBJ databases">
        <title>Complete sequence of chromosome of Methylobacterium populi BJ001.</title>
        <authorList>
            <consortium name="US DOE Joint Genome Institute"/>
            <person name="Copeland A."/>
            <person name="Lucas S."/>
            <person name="Lapidus A."/>
            <person name="Glavina del Rio T."/>
            <person name="Dalin E."/>
            <person name="Tice H."/>
            <person name="Bruce D."/>
            <person name="Goodwin L."/>
            <person name="Pitluck S."/>
            <person name="Chertkov O."/>
            <person name="Brettin T."/>
            <person name="Detter J.C."/>
            <person name="Han C."/>
            <person name="Kuske C.R."/>
            <person name="Schmutz J."/>
            <person name="Larimer F."/>
            <person name="Land M."/>
            <person name="Hauser L."/>
            <person name="Kyrpides N."/>
            <person name="Mikhailova N."/>
            <person name="Marx C."/>
            <person name="Richardson P."/>
        </authorList>
    </citation>
    <scope>NUCLEOTIDE SEQUENCE [LARGE SCALE GENOMIC DNA]</scope>
    <source>
        <strain>ATCC BAA-705 / NCIMB 13946 / BJ001</strain>
    </source>
</reference>
<protein>
    <recommendedName>
        <fullName evidence="2">D-alanine--D-alanine ligase</fullName>
        <ecNumber evidence="2">6.3.2.4</ecNumber>
    </recommendedName>
    <alternativeName>
        <fullName evidence="2">D-Ala-D-Ala ligase</fullName>
    </alternativeName>
    <alternativeName>
        <fullName evidence="2">D-alanylalanine synthetase</fullName>
    </alternativeName>
</protein>
<keyword id="KW-0067">ATP-binding</keyword>
<keyword id="KW-0133">Cell shape</keyword>
<keyword id="KW-0961">Cell wall biogenesis/degradation</keyword>
<keyword id="KW-0963">Cytoplasm</keyword>
<keyword id="KW-0436">Ligase</keyword>
<keyword id="KW-0460">Magnesium</keyword>
<keyword id="KW-0464">Manganese</keyword>
<keyword id="KW-0479">Metal-binding</keyword>
<keyword id="KW-0547">Nucleotide-binding</keyword>
<keyword id="KW-0573">Peptidoglycan synthesis</keyword>
<dbReference type="EC" id="6.3.2.4" evidence="2"/>
<dbReference type="EMBL" id="CP001029">
    <property type="protein sequence ID" value="ACB81282.1"/>
    <property type="molecule type" value="Genomic_DNA"/>
</dbReference>
<dbReference type="RefSeq" id="WP_012455000.1">
    <property type="nucleotide sequence ID" value="NC_010725.1"/>
</dbReference>
<dbReference type="SMR" id="B1ZGP9"/>
<dbReference type="STRING" id="441620.Mpop_3130"/>
<dbReference type="KEGG" id="mpo:Mpop_3130"/>
<dbReference type="eggNOG" id="COG1181">
    <property type="taxonomic scope" value="Bacteria"/>
</dbReference>
<dbReference type="HOGENOM" id="CLU_039268_1_1_5"/>
<dbReference type="OrthoDB" id="9813261at2"/>
<dbReference type="UniPathway" id="UPA00219"/>
<dbReference type="Proteomes" id="UP000007136">
    <property type="component" value="Chromosome"/>
</dbReference>
<dbReference type="GO" id="GO:0005737">
    <property type="term" value="C:cytoplasm"/>
    <property type="evidence" value="ECO:0007669"/>
    <property type="project" value="UniProtKB-SubCell"/>
</dbReference>
<dbReference type="GO" id="GO:0005524">
    <property type="term" value="F:ATP binding"/>
    <property type="evidence" value="ECO:0007669"/>
    <property type="project" value="UniProtKB-KW"/>
</dbReference>
<dbReference type="GO" id="GO:0008716">
    <property type="term" value="F:D-alanine-D-alanine ligase activity"/>
    <property type="evidence" value="ECO:0007669"/>
    <property type="project" value="UniProtKB-UniRule"/>
</dbReference>
<dbReference type="GO" id="GO:0046872">
    <property type="term" value="F:metal ion binding"/>
    <property type="evidence" value="ECO:0007669"/>
    <property type="project" value="UniProtKB-KW"/>
</dbReference>
<dbReference type="GO" id="GO:0071555">
    <property type="term" value="P:cell wall organization"/>
    <property type="evidence" value="ECO:0007669"/>
    <property type="project" value="UniProtKB-KW"/>
</dbReference>
<dbReference type="GO" id="GO:0009252">
    <property type="term" value="P:peptidoglycan biosynthetic process"/>
    <property type="evidence" value="ECO:0007669"/>
    <property type="project" value="UniProtKB-UniRule"/>
</dbReference>
<dbReference type="GO" id="GO:0008360">
    <property type="term" value="P:regulation of cell shape"/>
    <property type="evidence" value="ECO:0007669"/>
    <property type="project" value="UniProtKB-KW"/>
</dbReference>
<dbReference type="Gene3D" id="3.40.50.20">
    <property type="match status" value="1"/>
</dbReference>
<dbReference type="Gene3D" id="3.30.1490.20">
    <property type="entry name" value="ATP-grasp fold, A domain"/>
    <property type="match status" value="1"/>
</dbReference>
<dbReference type="Gene3D" id="3.30.470.20">
    <property type="entry name" value="ATP-grasp fold, B domain"/>
    <property type="match status" value="1"/>
</dbReference>
<dbReference type="HAMAP" id="MF_00047">
    <property type="entry name" value="Dala_Dala_lig"/>
    <property type="match status" value="1"/>
</dbReference>
<dbReference type="InterPro" id="IPR011761">
    <property type="entry name" value="ATP-grasp"/>
</dbReference>
<dbReference type="InterPro" id="IPR013815">
    <property type="entry name" value="ATP_grasp_subdomain_1"/>
</dbReference>
<dbReference type="InterPro" id="IPR000291">
    <property type="entry name" value="D-Ala_lig_Van_CS"/>
</dbReference>
<dbReference type="InterPro" id="IPR005905">
    <property type="entry name" value="D_ala_D_ala"/>
</dbReference>
<dbReference type="InterPro" id="IPR011095">
    <property type="entry name" value="Dala_Dala_lig_C"/>
</dbReference>
<dbReference type="InterPro" id="IPR011127">
    <property type="entry name" value="Dala_Dala_lig_N"/>
</dbReference>
<dbReference type="InterPro" id="IPR016185">
    <property type="entry name" value="PreATP-grasp_dom_sf"/>
</dbReference>
<dbReference type="NCBIfam" id="TIGR01205">
    <property type="entry name" value="D_ala_D_alaTIGR"/>
    <property type="match status" value="1"/>
</dbReference>
<dbReference type="NCBIfam" id="NF002378">
    <property type="entry name" value="PRK01372.1"/>
    <property type="match status" value="1"/>
</dbReference>
<dbReference type="PANTHER" id="PTHR23132">
    <property type="entry name" value="D-ALANINE--D-ALANINE LIGASE"/>
    <property type="match status" value="1"/>
</dbReference>
<dbReference type="PANTHER" id="PTHR23132:SF23">
    <property type="entry name" value="D-ALANINE--D-ALANINE LIGASE B"/>
    <property type="match status" value="1"/>
</dbReference>
<dbReference type="Pfam" id="PF07478">
    <property type="entry name" value="Dala_Dala_lig_C"/>
    <property type="match status" value="1"/>
</dbReference>
<dbReference type="Pfam" id="PF01820">
    <property type="entry name" value="Dala_Dala_lig_N"/>
    <property type="match status" value="1"/>
</dbReference>
<dbReference type="PIRSF" id="PIRSF039102">
    <property type="entry name" value="Ddl/VanB"/>
    <property type="match status" value="1"/>
</dbReference>
<dbReference type="SUPFAM" id="SSF56059">
    <property type="entry name" value="Glutathione synthetase ATP-binding domain-like"/>
    <property type="match status" value="1"/>
</dbReference>
<dbReference type="SUPFAM" id="SSF52440">
    <property type="entry name" value="PreATP-grasp domain"/>
    <property type="match status" value="1"/>
</dbReference>
<dbReference type="PROSITE" id="PS50975">
    <property type="entry name" value="ATP_GRASP"/>
    <property type="match status" value="1"/>
</dbReference>
<dbReference type="PROSITE" id="PS00843">
    <property type="entry name" value="DALA_DALA_LIGASE_1"/>
    <property type="match status" value="1"/>
</dbReference>
<dbReference type="PROSITE" id="PS00844">
    <property type="entry name" value="DALA_DALA_LIGASE_2"/>
    <property type="match status" value="1"/>
</dbReference>
<sequence>MSKHVAVLMGGWSSEREISLRSGNACAEALEGEGYRVTRVDVGPDIATVLTDLKPDAALNALHGPAGEDGTIQGLLEILKIPYTHSGVLASALAMHKERAKTVMRAAGVSVPEGRVVNRHDAAKSHPLTPPYVVKPIAEGSSMGVIIVREERSHPPQILASDEWVYGEEVLAETYIAGRELTCAVLGDRALGVTEIKPVSGEWYDFDAKYAGGGSIHVLPADLKLNIYQRVQELALTAHQALGCRGVSRADLRYDDTPGGTGALVVLEVNTQPGMTQTSLVPEIAAHAGLSFGELVRWMVEDASLNR</sequence>
<comment type="function">
    <text evidence="2">Cell wall formation.</text>
</comment>
<comment type="catalytic activity">
    <reaction evidence="2">
        <text>2 D-alanine + ATP = D-alanyl-D-alanine + ADP + phosphate + H(+)</text>
        <dbReference type="Rhea" id="RHEA:11224"/>
        <dbReference type="ChEBI" id="CHEBI:15378"/>
        <dbReference type="ChEBI" id="CHEBI:30616"/>
        <dbReference type="ChEBI" id="CHEBI:43474"/>
        <dbReference type="ChEBI" id="CHEBI:57416"/>
        <dbReference type="ChEBI" id="CHEBI:57822"/>
        <dbReference type="ChEBI" id="CHEBI:456216"/>
        <dbReference type="EC" id="6.3.2.4"/>
    </reaction>
</comment>
<comment type="cofactor">
    <cofactor evidence="1">
        <name>Mg(2+)</name>
        <dbReference type="ChEBI" id="CHEBI:18420"/>
    </cofactor>
    <cofactor evidence="1">
        <name>Mn(2+)</name>
        <dbReference type="ChEBI" id="CHEBI:29035"/>
    </cofactor>
    <text evidence="1">Binds 2 magnesium or manganese ions per subunit.</text>
</comment>
<comment type="pathway">
    <text evidence="2">Cell wall biogenesis; peptidoglycan biosynthesis.</text>
</comment>
<comment type="subcellular location">
    <subcellularLocation>
        <location evidence="2">Cytoplasm</location>
    </subcellularLocation>
</comment>
<comment type="similarity">
    <text evidence="2">Belongs to the D-alanine--D-alanine ligase family.</text>
</comment>
<evidence type="ECO:0000250" key="1"/>
<evidence type="ECO:0000255" key="2">
    <source>
        <dbReference type="HAMAP-Rule" id="MF_00047"/>
    </source>
</evidence>
<name>DDL_METPB</name>
<gene>
    <name evidence="2" type="primary">ddl</name>
    <name type="ordered locus">Mpop_3130</name>
</gene>